<feature type="chain" id="PRO_0000450059" description="MFS-type transporter pynF">
    <location>
        <begin position="1"/>
        <end position="434"/>
    </location>
</feature>
<feature type="transmembrane region" description="Helical" evidence="1">
    <location>
        <begin position="44"/>
        <end position="64"/>
    </location>
</feature>
<feature type="transmembrane region" description="Helical" evidence="1">
    <location>
        <begin position="84"/>
        <end position="104"/>
    </location>
</feature>
<feature type="transmembrane region" description="Helical" evidence="1">
    <location>
        <begin position="109"/>
        <end position="129"/>
    </location>
</feature>
<feature type="transmembrane region" description="Helical" evidence="1">
    <location>
        <begin position="138"/>
        <end position="158"/>
    </location>
</feature>
<feature type="transmembrane region" description="Helical" evidence="1">
    <location>
        <begin position="171"/>
        <end position="191"/>
    </location>
</feature>
<feature type="transmembrane region" description="Helical" evidence="1">
    <location>
        <begin position="203"/>
        <end position="223"/>
    </location>
</feature>
<feature type="transmembrane region" description="Helical" evidence="1">
    <location>
        <begin position="249"/>
        <end position="269"/>
    </location>
</feature>
<feature type="transmembrane region" description="Helical" evidence="1">
    <location>
        <begin position="280"/>
        <end position="302"/>
    </location>
</feature>
<feature type="transmembrane region" description="Helical" evidence="1">
    <location>
        <begin position="311"/>
        <end position="331"/>
    </location>
</feature>
<feature type="transmembrane region" description="Helical" evidence="1">
    <location>
        <begin position="334"/>
        <end position="354"/>
    </location>
</feature>
<feature type="transmembrane region" description="Helical" evidence="1">
    <location>
        <begin position="375"/>
        <end position="395"/>
    </location>
</feature>
<feature type="transmembrane region" description="Helical" evidence="1">
    <location>
        <begin position="402"/>
        <end position="422"/>
    </location>
</feature>
<feature type="region of interest" description="Disordered" evidence="2">
    <location>
        <begin position="1"/>
        <end position="34"/>
    </location>
</feature>
<feature type="compositionally biased region" description="Basic and acidic residues" evidence="2">
    <location>
        <begin position="1"/>
        <end position="13"/>
    </location>
</feature>
<proteinExistence type="evidence at transcript level"/>
<name>PYNF_ASPNC</name>
<reference key="1">
    <citation type="journal article" date="2007" name="Nat. Biotechnol.">
        <title>Genome sequencing and analysis of the versatile cell factory Aspergillus niger CBS 513.88.</title>
        <authorList>
            <person name="Pel H.J."/>
            <person name="de Winde J.H."/>
            <person name="Archer D.B."/>
            <person name="Dyer P.S."/>
            <person name="Hofmann G."/>
            <person name="Schaap P.J."/>
            <person name="Turner G."/>
            <person name="de Vries R.P."/>
            <person name="Albang R."/>
            <person name="Albermann K."/>
            <person name="Andersen M.R."/>
            <person name="Bendtsen J.D."/>
            <person name="Benen J.A.E."/>
            <person name="van den Berg M."/>
            <person name="Breestraat S."/>
            <person name="Caddick M.X."/>
            <person name="Contreras R."/>
            <person name="Cornell M."/>
            <person name="Coutinho P.M."/>
            <person name="Danchin E.G.J."/>
            <person name="Debets A.J.M."/>
            <person name="Dekker P."/>
            <person name="van Dijck P.W.M."/>
            <person name="van Dijk A."/>
            <person name="Dijkhuizen L."/>
            <person name="Driessen A.J.M."/>
            <person name="d'Enfert C."/>
            <person name="Geysens S."/>
            <person name="Goosen C."/>
            <person name="Groot G.S.P."/>
            <person name="de Groot P.W.J."/>
            <person name="Guillemette T."/>
            <person name="Henrissat B."/>
            <person name="Herweijer M."/>
            <person name="van den Hombergh J.P.T.W."/>
            <person name="van den Hondel C.A.M.J.J."/>
            <person name="van der Heijden R.T.J.M."/>
            <person name="van der Kaaij R.M."/>
            <person name="Klis F.M."/>
            <person name="Kools H.J."/>
            <person name="Kubicek C.P."/>
            <person name="van Kuyk P.A."/>
            <person name="Lauber J."/>
            <person name="Lu X."/>
            <person name="van der Maarel M.J.E.C."/>
            <person name="Meulenberg R."/>
            <person name="Menke H."/>
            <person name="Mortimer M.A."/>
            <person name="Nielsen J."/>
            <person name="Oliver S.G."/>
            <person name="Olsthoorn M."/>
            <person name="Pal K."/>
            <person name="van Peij N.N.M.E."/>
            <person name="Ram A.F.J."/>
            <person name="Rinas U."/>
            <person name="Roubos J.A."/>
            <person name="Sagt C.M.J."/>
            <person name="Schmoll M."/>
            <person name="Sun J."/>
            <person name="Ussery D."/>
            <person name="Varga J."/>
            <person name="Vervecken W."/>
            <person name="van de Vondervoort P.J.J."/>
            <person name="Wedler H."/>
            <person name="Woesten H.A.B."/>
            <person name="Zeng A.-P."/>
            <person name="van Ooyen A.J.J."/>
            <person name="Visser J."/>
            <person name="Stam H."/>
        </authorList>
    </citation>
    <scope>NUCLEOTIDE SEQUENCE [LARGE SCALE GENOMIC DNA]</scope>
    <source>
        <strain>ATCC MYA-4892 / CBS 513.88 / FGSC A1513</strain>
    </source>
</reference>
<reference key="2">
    <citation type="journal article" date="2013" name="ChemBioChem">
        <title>Pyranonigrin E: a PKS-NRPS hybrid metabolite from Aspergillus niger identified by genome mining.</title>
        <authorList>
            <person name="Awakawa T."/>
            <person name="Yang X.L."/>
            <person name="Wakimoto T."/>
            <person name="Abe I."/>
        </authorList>
    </citation>
    <scope>FUNCTION</scope>
    <scope>INDUCTION</scope>
</reference>
<reference key="3">
    <citation type="journal article" date="2015" name="Org. Lett.">
        <title>Elucidation of pyranonigrin biosynthetic pathway reveals a mode of tetramic acid, fused gamma-pyrone, and exo-methylene formation.</title>
        <authorList>
            <person name="Yamamoto T."/>
            <person name="Tsunematsu Y."/>
            <person name="Noguchi H."/>
            <person name="Hotta K."/>
            <person name="Watanabe K."/>
        </authorList>
    </citation>
    <scope>FUNCTION</scope>
</reference>
<gene>
    <name evidence="5" type="primary">pynF</name>
    <name type="ORF">An11g00260</name>
</gene>
<sequence>MSHDQRSPSEEVSRTALSKPASESTIVGDGHHPLPAKDTSTRAWLVVVGGLLIYFPTFGFLNAFGTFQTFYVQDLLAGTSSSKIAWIGSLQIFLLFIGGLVVGPLYDKVGATKLLVPGSVVYVVALMLTSVCKKYYQLILAQGILFGCANALLFYPTIAAINQWFDRRRGIALGLAVSGSSLGGIFWTEIIQLMLDHIGFGWTVRACGFISLAFLVPSCVLIITRPPEPGESKDMQLDFKAIFTDTKYLLFSVGMLLVLWGMFIPFFYLPSYGETYGMSVTGANNLLAYMNAGSFVGRVLTGLMADRLGRFNVISLAALSCGILLFCLHKITTSGAIIAFSTLYGICSGGLISLQSACIGQITPDHSIIGVKIGLMMGFCSVGGLTGSPIAGALLSADHQKWYGFIDFCGSILMGGAVVTILSRYVAAPREWKF</sequence>
<protein>
    <recommendedName>
        <fullName evidence="5">MFS-type transporter pynF</fullName>
    </recommendedName>
    <alternativeName>
        <fullName evidence="5">Pyranonigrins biosynthesis cluster protein F</fullName>
    </alternativeName>
</protein>
<evidence type="ECO:0000255" key="1"/>
<evidence type="ECO:0000256" key="2">
    <source>
        <dbReference type="SAM" id="MobiDB-lite"/>
    </source>
</evidence>
<evidence type="ECO:0000269" key="3">
    <source>
    </source>
</evidence>
<evidence type="ECO:0000269" key="4">
    <source>
    </source>
</evidence>
<evidence type="ECO:0000303" key="5">
    <source>
    </source>
</evidence>
<evidence type="ECO:0000305" key="6"/>
<evidence type="ECO:0000305" key="7">
    <source>
    </source>
</evidence>
<accession>A5ABG1</accession>
<keyword id="KW-1003">Cell membrane</keyword>
<keyword id="KW-0472">Membrane</keyword>
<keyword id="KW-1185">Reference proteome</keyword>
<keyword id="KW-0812">Transmembrane</keyword>
<keyword id="KW-1133">Transmembrane helix</keyword>
<keyword id="KW-0813">Transport</keyword>
<comment type="function">
    <text evidence="3 4 7">MFS-type transporter; part of the gene cluster that mediates the biosynthesis of pyranonigrins, a family of antioxidative compounds (PubMed:24106156, PubMed:26414728). May be involved in the secretion of pyranonigrins (Probable).</text>
</comment>
<comment type="subcellular location">
    <subcellularLocation>
        <location evidence="6">Cell membrane</location>
        <topology evidence="1">Multi-pass membrane protein</topology>
    </subcellularLocation>
</comment>
<comment type="induction">
    <text evidence="3">Expression is positively regulated by the cluster-specific transcription factor pynR.</text>
</comment>
<comment type="similarity">
    <text evidence="6">Belongs to the major facilitator superfamily. Monocarboxylate porter (TC 2.A.1.13) family.</text>
</comment>
<dbReference type="EMBL" id="AM270218">
    <property type="protein sequence ID" value="CAK48259.1"/>
    <property type="molecule type" value="Genomic_DNA"/>
</dbReference>
<dbReference type="RefSeq" id="XP_001394030.1">
    <property type="nucleotide sequence ID" value="XM_001393993.1"/>
</dbReference>
<dbReference type="SMR" id="A5ABG1"/>
<dbReference type="EnsemblFungi" id="CAK48259">
    <property type="protein sequence ID" value="CAK48259"/>
    <property type="gene ID" value="An11g00260"/>
</dbReference>
<dbReference type="GeneID" id="4984232"/>
<dbReference type="KEGG" id="ang:An11g00260"/>
<dbReference type="VEuPathDB" id="FungiDB:An11g00260"/>
<dbReference type="HOGENOM" id="CLU_001265_1_1_1"/>
<dbReference type="Proteomes" id="UP000006706">
    <property type="component" value="Chromosome 7R"/>
</dbReference>
<dbReference type="GO" id="GO:0005886">
    <property type="term" value="C:plasma membrane"/>
    <property type="evidence" value="ECO:0007669"/>
    <property type="project" value="UniProtKB-SubCell"/>
</dbReference>
<dbReference type="GO" id="GO:0022857">
    <property type="term" value="F:transmembrane transporter activity"/>
    <property type="evidence" value="ECO:0007669"/>
    <property type="project" value="InterPro"/>
</dbReference>
<dbReference type="GO" id="GO:0019748">
    <property type="term" value="P:secondary metabolic process"/>
    <property type="evidence" value="ECO:0000317"/>
    <property type="project" value="AspGD"/>
</dbReference>
<dbReference type="CDD" id="cd17352">
    <property type="entry name" value="MFS_MCT_SLC16"/>
    <property type="match status" value="1"/>
</dbReference>
<dbReference type="FunFam" id="1.20.1250.20:FF:000830">
    <property type="entry name" value="MFS general substrate transporter"/>
    <property type="match status" value="1"/>
</dbReference>
<dbReference type="Gene3D" id="1.20.1250.20">
    <property type="entry name" value="MFS general substrate transporter like domains"/>
    <property type="match status" value="1"/>
</dbReference>
<dbReference type="InterPro" id="IPR011701">
    <property type="entry name" value="MFS"/>
</dbReference>
<dbReference type="InterPro" id="IPR020846">
    <property type="entry name" value="MFS_dom"/>
</dbReference>
<dbReference type="InterPro" id="IPR036259">
    <property type="entry name" value="MFS_trans_sf"/>
</dbReference>
<dbReference type="InterPro" id="IPR050327">
    <property type="entry name" value="Proton-linked_MCT"/>
</dbReference>
<dbReference type="PANTHER" id="PTHR11360">
    <property type="entry name" value="MONOCARBOXYLATE TRANSPORTER"/>
    <property type="match status" value="1"/>
</dbReference>
<dbReference type="PANTHER" id="PTHR11360:SF177">
    <property type="entry name" value="RIBOFLAVIN TRANSPORTER MCH5"/>
    <property type="match status" value="1"/>
</dbReference>
<dbReference type="Pfam" id="PF07690">
    <property type="entry name" value="MFS_1"/>
    <property type="match status" value="1"/>
</dbReference>
<dbReference type="SUPFAM" id="SSF103473">
    <property type="entry name" value="MFS general substrate transporter"/>
    <property type="match status" value="1"/>
</dbReference>
<dbReference type="PROSITE" id="PS50850">
    <property type="entry name" value="MFS"/>
    <property type="match status" value="1"/>
</dbReference>
<organism>
    <name type="scientific">Aspergillus niger (strain ATCC MYA-4892 / CBS 513.88 / FGSC A1513)</name>
    <dbReference type="NCBI Taxonomy" id="425011"/>
    <lineage>
        <taxon>Eukaryota</taxon>
        <taxon>Fungi</taxon>
        <taxon>Dikarya</taxon>
        <taxon>Ascomycota</taxon>
        <taxon>Pezizomycotina</taxon>
        <taxon>Eurotiomycetes</taxon>
        <taxon>Eurotiomycetidae</taxon>
        <taxon>Eurotiales</taxon>
        <taxon>Aspergillaceae</taxon>
        <taxon>Aspergillus</taxon>
        <taxon>Aspergillus subgen. Circumdati</taxon>
    </lineage>
</organism>